<sequence length="114" mass="12965">MSNDNILKNIHEINLSYLLLAQELIKQDKKVASFRLGVCEDTLNKISKLSLSELIKLGAINQLICLLRLDDEKVINCLTRESRVDELQQVHTGIMLSTQLLRSHKSNSNHALKE</sequence>
<feature type="chain" id="PRO_0000182727" description="Flagellar transcriptional regulator FlhD">
    <location>
        <begin position="1"/>
        <end position="114"/>
    </location>
</feature>
<feature type="disulfide bond" description="Interchain" evidence="1">
    <location>
        <position position="65"/>
    </location>
</feature>
<accession>Q8D3H1</accession>
<reference key="1">
    <citation type="journal article" date="2002" name="Nat. Genet.">
        <title>Genome sequence of the endocellular obligate symbiont of tsetse flies, Wigglesworthia glossinidia.</title>
        <authorList>
            <person name="Akman L."/>
            <person name="Yamashita A."/>
            <person name="Watanabe H."/>
            <person name="Oshima K."/>
            <person name="Shiba T."/>
            <person name="Hattori M."/>
            <person name="Aksoy S."/>
        </authorList>
    </citation>
    <scope>NUCLEOTIDE SEQUENCE [LARGE SCALE GENOMIC DNA]</scope>
</reference>
<dbReference type="EMBL" id="BA000021">
    <property type="protein sequence ID" value="BAC24176.1"/>
    <property type="molecule type" value="Genomic_DNA"/>
</dbReference>
<dbReference type="SMR" id="Q8D3H1"/>
<dbReference type="STRING" id="36870.gene:10368508"/>
<dbReference type="KEGG" id="wbr:flhD"/>
<dbReference type="eggNOG" id="ENOG5031P80">
    <property type="taxonomic scope" value="Bacteria"/>
</dbReference>
<dbReference type="HOGENOM" id="CLU_144160_1_0_6"/>
<dbReference type="OrthoDB" id="5298036at2"/>
<dbReference type="Proteomes" id="UP000000562">
    <property type="component" value="Chromosome"/>
</dbReference>
<dbReference type="GO" id="GO:0005737">
    <property type="term" value="C:cytoplasm"/>
    <property type="evidence" value="ECO:0007669"/>
    <property type="project" value="UniProtKB-SubCell"/>
</dbReference>
<dbReference type="GO" id="GO:0003677">
    <property type="term" value="F:DNA binding"/>
    <property type="evidence" value="ECO:0007669"/>
    <property type="project" value="UniProtKB-UniRule"/>
</dbReference>
<dbReference type="GO" id="GO:0044780">
    <property type="term" value="P:bacterial-type flagellum assembly"/>
    <property type="evidence" value="ECO:0007669"/>
    <property type="project" value="InterPro"/>
</dbReference>
<dbReference type="GO" id="GO:0045893">
    <property type="term" value="P:positive regulation of DNA-templated transcription"/>
    <property type="evidence" value="ECO:0007669"/>
    <property type="project" value="InterPro"/>
</dbReference>
<dbReference type="GO" id="GO:1902208">
    <property type="term" value="P:regulation of bacterial-type flagellum assembly"/>
    <property type="evidence" value="ECO:0007669"/>
    <property type="project" value="UniProtKB-UniRule"/>
</dbReference>
<dbReference type="Gene3D" id="1.10.4000.10">
    <property type="entry name" value="Flagellar transcriptional activator FlhD"/>
    <property type="match status" value="1"/>
</dbReference>
<dbReference type="HAMAP" id="MF_00725">
    <property type="entry name" value="FlhD"/>
    <property type="match status" value="1"/>
</dbReference>
<dbReference type="InterPro" id="IPR023559">
    <property type="entry name" value="Flagellar_FlhD"/>
</dbReference>
<dbReference type="InterPro" id="IPR036194">
    <property type="entry name" value="FlhD_sf"/>
</dbReference>
<dbReference type="NCBIfam" id="NF002783">
    <property type="entry name" value="PRK02909.1-1"/>
    <property type="match status" value="1"/>
</dbReference>
<dbReference type="Pfam" id="PF05247">
    <property type="entry name" value="FlhD"/>
    <property type="match status" value="1"/>
</dbReference>
<dbReference type="SUPFAM" id="SSF63592">
    <property type="entry name" value="Flagellar transcriptional activator FlhD"/>
    <property type="match status" value="1"/>
</dbReference>
<evidence type="ECO:0000255" key="1">
    <source>
        <dbReference type="HAMAP-Rule" id="MF_00725"/>
    </source>
</evidence>
<keyword id="KW-0010">Activator</keyword>
<keyword id="KW-1005">Bacterial flagellum biogenesis</keyword>
<keyword id="KW-0963">Cytoplasm</keyword>
<keyword id="KW-1015">Disulfide bond</keyword>
<keyword id="KW-0238">DNA-binding</keyword>
<keyword id="KW-1185">Reference proteome</keyword>
<keyword id="KW-0804">Transcription</keyword>
<keyword id="KW-0805">Transcription regulation</keyword>
<comment type="function">
    <text evidence="1">Functions in complex with FlhC as a master transcriptional regulator that regulates transcription of several flagellar and non-flagellar operons by binding to their promoter region. Activates expression of class 2 flagellar genes, including fliA, which is a flagellum-specific sigma factor that turns on the class 3 genes. Also regulates genes whose products function in a variety of physiological pathways.</text>
</comment>
<comment type="subunit">
    <text evidence="1">Homodimer; disulfide-linked. Forms a heterohexamer composed of two FlhC and four FlhD subunits. Each FlhC binds a FlhD dimer, forming a heterotrimer, and a hexamer assembles by dimerization of two heterotrimers.</text>
</comment>
<comment type="subcellular location">
    <subcellularLocation>
        <location evidence="1">Cytoplasm</location>
    </subcellularLocation>
</comment>
<comment type="domain">
    <text evidence="1">The C-terminal region contains a putative helix-turn-helix (HTH) motif, suggesting that this region may bind DNA.</text>
</comment>
<comment type="similarity">
    <text evidence="1">Belongs to the FlhD family.</text>
</comment>
<name>FLHD_WIGBR</name>
<organism>
    <name type="scientific">Wigglesworthia glossinidia brevipalpis</name>
    <dbReference type="NCBI Taxonomy" id="36870"/>
    <lineage>
        <taxon>Bacteria</taxon>
        <taxon>Pseudomonadati</taxon>
        <taxon>Pseudomonadota</taxon>
        <taxon>Gammaproteobacteria</taxon>
        <taxon>Enterobacterales</taxon>
        <taxon>Erwiniaceae</taxon>
        <taxon>Wigglesworthia</taxon>
    </lineage>
</organism>
<protein>
    <recommendedName>
        <fullName evidence="1">Flagellar transcriptional regulator FlhD</fullName>
    </recommendedName>
</protein>
<proteinExistence type="inferred from homology"/>
<gene>
    <name evidence="1" type="primary">flhD</name>
    <name type="ordered locus">WIGBR0300</name>
</gene>